<accession>B2W0B1</accession>
<comment type="function">
    <text evidence="1">DEAD-box RNA helicase-like protein required for pre-18S rRNA processing, specifically at sites A0, A1, and A2.</text>
</comment>
<comment type="subunit">
    <text evidence="1">Component of the ribosomal small subunit (SSU) processome composed of at least 40 protein subunits and snoRNA U3.</text>
</comment>
<comment type="subcellular location">
    <subcellularLocation>
        <location evidence="1">Nucleus</location>
        <location evidence="1">Nucleolus</location>
    </subcellularLocation>
</comment>
<comment type="similarity">
    <text evidence="3">Belongs to the UTP25 family.</text>
</comment>
<reference key="1">
    <citation type="journal article" date="2013" name="G3 (Bethesda)">
        <title>Comparative genomics of a plant-pathogenic fungus, Pyrenophora tritici-repentis, reveals transduplication and the impact of repeat elements on pathogenicity and population divergence.</title>
        <authorList>
            <person name="Manning V.A."/>
            <person name="Pandelova I."/>
            <person name="Dhillon B."/>
            <person name="Wilhelm L.J."/>
            <person name="Goodwin S.B."/>
            <person name="Berlin A.M."/>
            <person name="Figueroa M."/>
            <person name="Freitag M."/>
            <person name="Hane J.K."/>
            <person name="Henrissat B."/>
            <person name="Holman W.H."/>
            <person name="Kodira C.D."/>
            <person name="Martin J."/>
            <person name="Oliver R.P."/>
            <person name="Robbertse B."/>
            <person name="Schackwitz W."/>
            <person name="Schwartz D.C."/>
            <person name="Spatafora J.W."/>
            <person name="Turgeon B.G."/>
            <person name="Yandava C."/>
            <person name="Young S."/>
            <person name="Zhou S."/>
            <person name="Zeng Q."/>
            <person name="Grigoriev I.V."/>
            <person name="Ma L.-J."/>
            <person name="Ciuffetti L.M."/>
        </authorList>
    </citation>
    <scope>NUCLEOTIDE SEQUENCE [LARGE SCALE GENOMIC DNA]</scope>
    <source>
        <strain>Pt-1C-BFP</strain>
    </source>
</reference>
<protein>
    <recommendedName>
        <fullName>U3 small nucleolar RNA-associated protein 25</fullName>
        <shortName>U3 snoRNA-associated protein 25</shortName>
    </recommendedName>
    <alternativeName>
        <fullName>U three protein 25</fullName>
    </alternativeName>
</protein>
<evidence type="ECO:0000250" key="1"/>
<evidence type="ECO:0000256" key="2">
    <source>
        <dbReference type="SAM" id="MobiDB-lite"/>
    </source>
</evidence>
<evidence type="ECO:0000305" key="3"/>
<dbReference type="EMBL" id="DS231617">
    <property type="protein sequence ID" value="EDU46734.1"/>
    <property type="molecule type" value="Genomic_DNA"/>
</dbReference>
<dbReference type="RefSeq" id="XP_001934229.1">
    <property type="nucleotide sequence ID" value="XM_001934194.1"/>
</dbReference>
<dbReference type="FunCoup" id="B2W0B1">
    <property type="interactions" value="1200"/>
</dbReference>
<dbReference type="STRING" id="426418.B2W0B1"/>
<dbReference type="EnsemblFungi" id="EDU46734">
    <property type="protein sequence ID" value="EDU46734"/>
    <property type="gene ID" value="PTRG_03896"/>
</dbReference>
<dbReference type="GeneID" id="6342132"/>
<dbReference type="KEGG" id="ptrr:6342132"/>
<dbReference type="eggNOG" id="KOG2340">
    <property type="taxonomic scope" value="Eukaryota"/>
</dbReference>
<dbReference type="HOGENOM" id="CLU_018705_0_1_1"/>
<dbReference type="InParanoid" id="B2W0B1"/>
<dbReference type="OMA" id="QDRGDTF"/>
<dbReference type="OrthoDB" id="22687at28556"/>
<dbReference type="Proteomes" id="UP000001471">
    <property type="component" value="Unassembled WGS sequence"/>
</dbReference>
<dbReference type="GO" id="GO:0005730">
    <property type="term" value="C:nucleolus"/>
    <property type="evidence" value="ECO:0007669"/>
    <property type="project" value="UniProtKB-SubCell"/>
</dbReference>
<dbReference type="GO" id="GO:0032040">
    <property type="term" value="C:small-subunit processome"/>
    <property type="evidence" value="ECO:0007669"/>
    <property type="project" value="EnsemblFungi"/>
</dbReference>
<dbReference type="GO" id="GO:0019843">
    <property type="term" value="F:rRNA binding"/>
    <property type="evidence" value="ECO:0007669"/>
    <property type="project" value="EnsemblFungi"/>
</dbReference>
<dbReference type="GO" id="GO:0034511">
    <property type="term" value="F:U3 snoRNA binding"/>
    <property type="evidence" value="ECO:0007669"/>
    <property type="project" value="EnsemblFungi"/>
</dbReference>
<dbReference type="GO" id="GO:0000462">
    <property type="term" value="P:maturation of SSU-rRNA from tricistronic rRNA transcript (SSU-rRNA, 5.8S rRNA, LSU-rRNA)"/>
    <property type="evidence" value="ECO:0007669"/>
    <property type="project" value="EnsemblFungi"/>
</dbReference>
<dbReference type="FunFam" id="3.40.50.300:FF:002356">
    <property type="entry name" value="U3 small nucleolar RNA-associated protein 25"/>
    <property type="match status" value="1"/>
</dbReference>
<dbReference type="Gene3D" id="3.40.50.300">
    <property type="entry name" value="P-loop containing nucleotide triphosphate hydrolases"/>
    <property type="match status" value="1"/>
</dbReference>
<dbReference type="InterPro" id="IPR027417">
    <property type="entry name" value="P-loop_NTPase"/>
</dbReference>
<dbReference type="InterPro" id="IPR010678">
    <property type="entry name" value="UTP25"/>
</dbReference>
<dbReference type="InterPro" id="IPR053939">
    <property type="entry name" value="UTP25_C"/>
</dbReference>
<dbReference type="InterPro" id="IPR053940">
    <property type="entry name" value="UTP25_NTPase-like"/>
</dbReference>
<dbReference type="PANTHER" id="PTHR12933">
    <property type="entry name" value="ORF PROTEIN-RELATED"/>
    <property type="match status" value="1"/>
</dbReference>
<dbReference type="PANTHER" id="PTHR12933:SF0">
    <property type="entry name" value="U3 SMALL NUCLEOLAR RNA-ASSOCIATED PROTEIN 25 HOMOLOG"/>
    <property type="match status" value="1"/>
</dbReference>
<dbReference type="Pfam" id="PF06862">
    <property type="entry name" value="Utp25_C"/>
    <property type="match status" value="1"/>
</dbReference>
<dbReference type="Pfam" id="PF22916">
    <property type="entry name" value="UTP25_NTPase-like"/>
    <property type="match status" value="1"/>
</dbReference>
<proteinExistence type="inferred from homology"/>
<gene>
    <name type="primary">utp25</name>
    <name type="ORF">PTRG_03896</name>
</gene>
<name>UTP25_PYRTR</name>
<keyword id="KW-0539">Nucleus</keyword>
<keyword id="KW-1185">Reference proteome</keyword>
<keyword id="KW-0687">Ribonucleoprotein</keyword>
<keyword id="KW-0690">Ribosome biogenesis</keyword>
<keyword id="KW-0698">rRNA processing</keyword>
<feature type="chain" id="PRO_0000408136" description="U3 small nucleolar RNA-associated protein 25">
    <location>
        <begin position="1"/>
        <end position="680"/>
    </location>
</feature>
<feature type="region of interest" description="Disordered" evidence="2">
    <location>
        <begin position="1"/>
        <end position="120"/>
    </location>
</feature>
<feature type="compositionally biased region" description="Acidic residues" evidence="2">
    <location>
        <begin position="18"/>
        <end position="39"/>
    </location>
</feature>
<feature type="compositionally biased region" description="Polar residues" evidence="2">
    <location>
        <begin position="45"/>
        <end position="57"/>
    </location>
</feature>
<feature type="compositionally biased region" description="Acidic residues" evidence="2">
    <location>
        <begin position="76"/>
        <end position="85"/>
    </location>
</feature>
<feature type="compositionally biased region" description="Acidic residues" evidence="2">
    <location>
        <begin position="105"/>
        <end position="117"/>
    </location>
</feature>
<organism>
    <name type="scientific">Pyrenophora tritici-repentis (strain Pt-1C-BFP)</name>
    <name type="common">Wheat tan spot fungus</name>
    <name type="synonym">Drechslera tritici-repentis</name>
    <dbReference type="NCBI Taxonomy" id="426418"/>
    <lineage>
        <taxon>Eukaryota</taxon>
        <taxon>Fungi</taxon>
        <taxon>Dikarya</taxon>
        <taxon>Ascomycota</taxon>
        <taxon>Pezizomycotina</taxon>
        <taxon>Dothideomycetes</taxon>
        <taxon>Pleosporomycetidae</taxon>
        <taxon>Pleosporales</taxon>
        <taxon>Pleosporineae</taxon>
        <taxon>Pleosporaceae</taxon>
        <taxon>Pyrenophora</taxon>
    </lineage>
</organism>
<sequence>MAHVLMVTSNINMREPPETEESESEASDDAASDDDEEEAQPASNAYATLLQSFSTRHAGSEEHRKKRRKLDHEEVPQEDISEAEEASVYGTPEGDGTVVDQEQHETDDEAADEDDGKEQELEKAYEKHFANPDENELATRLKQIAANQWSSQKLTCGSGTTKGFGVLQIPVEEAQTPPKKLKSVHDIQLKQRLVENAQNKVGNFDQVEQTIAPSIFGYQDLLFGARTVQNACRLRDITCLHALNHILMTRDRVLKNNAKLAAAPDDVDAEYRDQGFTRPKILFLLETKQACVRVLDSITKLHEFEQQENKKRFLDSFSQPEDKFSEDRPADFRELFEGNDENEFRIGVKLTRKTLKLYSTFYNSDIIFASTLGLRRAIESGDPKKKDYDFLSSIEMVIMEQADATLMQNWEHAEYVFEHLNLQPKDAHGCDFSRVRSWYLDGHAPHIRQTIVLSAFVTPKINTLYNKHMRNVAGRLKYTADHTDGLIESLSYGIKQTFVRFDSPSHLTDPDARFKYFSSSILPSITRLPRTVDAGGLGVLIFIPSYLDFVRVRNSLVDSDFSYASISEYTDATDVRKARSHFMNGKHALLLYTGRAHHFHRYNIRGVKRVVFYGVPENPKFYDEVVGFVGKSIERAEISRQEASVRVCFSKWEKMELERIVGTKRVGKLVRERGDVFDFV</sequence>